<reference key="1">
    <citation type="journal article" date="2008" name="BMC Genomics">
        <title>The genome of Aeromonas salmonicida subsp. salmonicida A449: insights into the evolution of a fish pathogen.</title>
        <authorList>
            <person name="Reith M.E."/>
            <person name="Singh R.K."/>
            <person name="Curtis B."/>
            <person name="Boyd J.M."/>
            <person name="Bouevitch A."/>
            <person name="Kimball J."/>
            <person name="Munholland J."/>
            <person name="Murphy C."/>
            <person name="Sarty D."/>
            <person name="Williams J."/>
            <person name="Nash J.H."/>
            <person name="Johnson S.C."/>
            <person name="Brown L.L."/>
        </authorList>
    </citation>
    <scope>NUCLEOTIDE SEQUENCE [LARGE SCALE GENOMIC DNA]</scope>
    <source>
        <strain>A449</strain>
    </source>
</reference>
<name>ACYP_AERS4</name>
<evidence type="ECO:0000255" key="1">
    <source>
        <dbReference type="PROSITE-ProRule" id="PRU00520"/>
    </source>
</evidence>
<evidence type="ECO:0000305" key="2"/>
<dbReference type="EC" id="3.6.1.7"/>
<dbReference type="EMBL" id="CP000644">
    <property type="protein sequence ID" value="ABO90138.1"/>
    <property type="molecule type" value="Genomic_DNA"/>
</dbReference>
<dbReference type="SMR" id="A4SML6"/>
<dbReference type="STRING" id="29491.GCA_000820065_00682"/>
<dbReference type="KEGG" id="asa:ASA_2072"/>
<dbReference type="eggNOG" id="COG1254">
    <property type="taxonomic scope" value="Bacteria"/>
</dbReference>
<dbReference type="HOGENOM" id="CLU_141932_1_2_6"/>
<dbReference type="Proteomes" id="UP000000225">
    <property type="component" value="Chromosome"/>
</dbReference>
<dbReference type="GO" id="GO:0003998">
    <property type="term" value="F:acylphosphatase activity"/>
    <property type="evidence" value="ECO:0007669"/>
    <property type="project" value="UniProtKB-EC"/>
</dbReference>
<dbReference type="Gene3D" id="3.30.70.100">
    <property type="match status" value="1"/>
</dbReference>
<dbReference type="InterPro" id="IPR020456">
    <property type="entry name" value="Acylphosphatase"/>
</dbReference>
<dbReference type="InterPro" id="IPR001792">
    <property type="entry name" value="Acylphosphatase-like_dom"/>
</dbReference>
<dbReference type="InterPro" id="IPR036046">
    <property type="entry name" value="Acylphosphatase-like_dom_sf"/>
</dbReference>
<dbReference type="InterPro" id="IPR017968">
    <property type="entry name" value="Acylphosphatase_CS"/>
</dbReference>
<dbReference type="NCBIfam" id="NF011000">
    <property type="entry name" value="PRK14426.1"/>
    <property type="match status" value="1"/>
</dbReference>
<dbReference type="PANTHER" id="PTHR47268">
    <property type="entry name" value="ACYLPHOSPHATASE"/>
    <property type="match status" value="1"/>
</dbReference>
<dbReference type="PANTHER" id="PTHR47268:SF4">
    <property type="entry name" value="ACYLPHOSPHATASE"/>
    <property type="match status" value="1"/>
</dbReference>
<dbReference type="Pfam" id="PF00708">
    <property type="entry name" value="Acylphosphatase"/>
    <property type="match status" value="1"/>
</dbReference>
<dbReference type="SUPFAM" id="SSF54975">
    <property type="entry name" value="Acylphosphatase/BLUF domain-like"/>
    <property type="match status" value="1"/>
</dbReference>
<dbReference type="PROSITE" id="PS00150">
    <property type="entry name" value="ACYLPHOSPHATASE_1"/>
    <property type="match status" value="1"/>
</dbReference>
<dbReference type="PROSITE" id="PS51160">
    <property type="entry name" value="ACYLPHOSPHATASE_3"/>
    <property type="match status" value="1"/>
</dbReference>
<accession>A4SML6</accession>
<proteinExistence type="inferred from homology"/>
<keyword id="KW-0378">Hydrolase</keyword>
<sequence length="90" mass="10111">MGEQSFVVHVWGQVQGVGFRYFTRERALQLGLRGYAYNLADGSVEILICGPEQGVQMMLGWLEHGPRTAEVTRMEYEEAPPPQKGGFHTN</sequence>
<comment type="catalytic activity">
    <reaction>
        <text>an acyl phosphate + H2O = a carboxylate + phosphate + H(+)</text>
        <dbReference type="Rhea" id="RHEA:14965"/>
        <dbReference type="ChEBI" id="CHEBI:15377"/>
        <dbReference type="ChEBI" id="CHEBI:15378"/>
        <dbReference type="ChEBI" id="CHEBI:29067"/>
        <dbReference type="ChEBI" id="CHEBI:43474"/>
        <dbReference type="ChEBI" id="CHEBI:59918"/>
        <dbReference type="EC" id="3.6.1.7"/>
    </reaction>
</comment>
<comment type="similarity">
    <text evidence="2">Belongs to the acylphosphatase family.</text>
</comment>
<protein>
    <recommendedName>
        <fullName>Acylphosphatase</fullName>
        <ecNumber>3.6.1.7</ecNumber>
    </recommendedName>
    <alternativeName>
        <fullName>Acylphosphate phosphohydrolase</fullName>
    </alternativeName>
</protein>
<gene>
    <name type="primary">acyP</name>
    <name type="ordered locus">ASA_2072</name>
</gene>
<organism>
    <name type="scientific">Aeromonas salmonicida (strain A449)</name>
    <dbReference type="NCBI Taxonomy" id="382245"/>
    <lineage>
        <taxon>Bacteria</taxon>
        <taxon>Pseudomonadati</taxon>
        <taxon>Pseudomonadota</taxon>
        <taxon>Gammaproteobacteria</taxon>
        <taxon>Aeromonadales</taxon>
        <taxon>Aeromonadaceae</taxon>
        <taxon>Aeromonas</taxon>
    </lineage>
</organism>
<feature type="chain" id="PRO_0000326645" description="Acylphosphatase">
    <location>
        <begin position="1"/>
        <end position="90"/>
    </location>
</feature>
<feature type="domain" description="Acylphosphatase-like" evidence="1">
    <location>
        <begin position="5"/>
        <end position="90"/>
    </location>
</feature>
<feature type="active site" evidence="1">
    <location>
        <position position="20"/>
    </location>
</feature>
<feature type="active site" evidence="1">
    <location>
        <position position="38"/>
    </location>
</feature>